<sequence>MTDHNEAKKVLLSPFISNNPIMLQVLGICSALAVTSKMETAFVMALAVTVVTGFSNLFISLIRHIIPNSVRIIVQMTIIASLVIVVDQLLKAFSYELSKQLSVFVGLIITNCIVMGRAEAYAMKSPPWLSFLDGIGNGLGYGFILLLVGTIREVIGSGSWFGITLFETVNNGGWYIPNGMLLMPPSAFFLIGLFIWVLRTLRPEQQEPTEHGHKE</sequence>
<name>NQRD_TOLAT</name>
<accession>C4LD54</accession>
<proteinExistence type="inferred from homology"/>
<comment type="function">
    <text evidence="1">NQR complex catalyzes the reduction of ubiquinone-1 to ubiquinol by two successive reactions, coupled with the transport of Na(+) ions from the cytoplasm to the periplasm. NqrA to NqrE are probably involved in the second step, the conversion of ubisemiquinone to ubiquinol.</text>
</comment>
<comment type="catalytic activity">
    <reaction evidence="1">
        <text>a ubiquinone + n Na(+)(in) + NADH + H(+) = a ubiquinol + n Na(+)(out) + NAD(+)</text>
        <dbReference type="Rhea" id="RHEA:47748"/>
        <dbReference type="Rhea" id="RHEA-COMP:9565"/>
        <dbReference type="Rhea" id="RHEA-COMP:9566"/>
        <dbReference type="ChEBI" id="CHEBI:15378"/>
        <dbReference type="ChEBI" id="CHEBI:16389"/>
        <dbReference type="ChEBI" id="CHEBI:17976"/>
        <dbReference type="ChEBI" id="CHEBI:29101"/>
        <dbReference type="ChEBI" id="CHEBI:57540"/>
        <dbReference type="ChEBI" id="CHEBI:57945"/>
        <dbReference type="EC" id="7.2.1.1"/>
    </reaction>
</comment>
<comment type="subunit">
    <text evidence="1">Composed of six subunits; NqrA, NqrB, NqrC, NqrD, NqrE and NqrF.</text>
</comment>
<comment type="subcellular location">
    <subcellularLocation>
        <location evidence="1">Cell inner membrane</location>
        <topology evidence="1">Multi-pass membrane protein</topology>
    </subcellularLocation>
</comment>
<comment type="similarity">
    <text evidence="1">Belongs to the NqrDE/RnfAE family.</text>
</comment>
<reference key="1">
    <citation type="submission" date="2009-05" db="EMBL/GenBank/DDBJ databases">
        <title>Complete sequence of Tolumonas auensis DSM 9187.</title>
        <authorList>
            <consortium name="US DOE Joint Genome Institute"/>
            <person name="Lucas S."/>
            <person name="Copeland A."/>
            <person name="Lapidus A."/>
            <person name="Glavina del Rio T."/>
            <person name="Tice H."/>
            <person name="Bruce D."/>
            <person name="Goodwin L."/>
            <person name="Pitluck S."/>
            <person name="Chertkov O."/>
            <person name="Brettin T."/>
            <person name="Detter J.C."/>
            <person name="Han C."/>
            <person name="Larimer F."/>
            <person name="Land M."/>
            <person name="Hauser L."/>
            <person name="Kyrpides N."/>
            <person name="Mikhailova N."/>
            <person name="Spring S."/>
            <person name="Beller H."/>
        </authorList>
    </citation>
    <scope>NUCLEOTIDE SEQUENCE [LARGE SCALE GENOMIC DNA]</scope>
    <source>
        <strain>DSM 9187 / NBRC 110442 / TA 4</strain>
    </source>
</reference>
<protein>
    <recommendedName>
        <fullName evidence="1">Na(+)-translocating NADH-quinone reductase subunit D</fullName>
        <shortName evidence="1">Na(+)-NQR subunit D</shortName>
        <shortName evidence="1">Na(+)-translocating NQR subunit D</shortName>
        <ecNumber evidence="1">7.2.1.1</ecNumber>
    </recommendedName>
    <alternativeName>
        <fullName evidence="1">NQR complex subunit D</fullName>
    </alternativeName>
    <alternativeName>
        <fullName evidence="1">NQR-1 subunit D</fullName>
    </alternativeName>
</protein>
<dbReference type="EC" id="7.2.1.1" evidence="1"/>
<dbReference type="EMBL" id="CP001616">
    <property type="protein sequence ID" value="ACQ94585.1"/>
    <property type="molecule type" value="Genomic_DNA"/>
</dbReference>
<dbReference type="RefSeq" id="WP_015880034.1">
    <property type="nucleotide sequence ID" value="NC_012691.1"/>
</dbReference>
<dbReference type="SMR" id="C4LD54"/>
<dbReference type="STRING" id="595494.Tola_2996"/>
<dbReference type="KEGG" id="tau:Tola_2996"/>
<dbReference type="eggNOG" id="COG1347">
    <property type="taxonomic scope" value="Bacteria"/>
</dbReference>
<dbReference type="HOGENOM" id="CLU_046659_1_1_6"/>
<dbReference type="OrthoDB" id="9782945at2"/>
<dbReference type="Proteomes" id="UP000009073">
    <property type="component" value="Chromosome"/>
</dbReference>
<dbReference type="GO" id="GO:0005886">
    <property type="term" value="C:plasma membrane"/>
    <property type="evidence" value="ECO:0007669"/>
    <property type="project" value="UniProtKB-SubCell"/>
</dbReference>
<dbReference type="GO" id="GO:0016655">
    <property type="term" value="F:oxidoreductase activity, acting on NAD(P)H, quinone or similar compound as acceptor"/>
    <property type="evidence" value="ECO:0007669"/>
    <property type="project" value="UniProtKB-UniRule"/>
</dbReference>
<dbReference type="GO" id="GO:0006814">
    <property type="term" value="P:sodium ion transport"/>
    <property type="evidence" value="ECO:0007669"/>
    <property type="project" value="UniProtKB-UniRule"/>
</dbReference>
<dbReference type="HAMAP" id="MF_00428">
    <property type="entry name" value="NqrD"/>
    <property type="match status" value="1"/>
</dbReference>
<dbReference type="InterPro" id="IPR011292">
    <property type="entry name" value="NqrD"/>
</dbReference>
<dbReference type="InterPro" id="IPR003667">
    <property type="entry name" value="NqrDE/RnfAE"/>
</dbReference>
<dbReference type="NCBIfam" id="TIGR01939">
    <property type="entry name" value="nqrD"/>
    <property type="match status" value="1"/>
</dbReference>
<dbReference type="NCBIfam" id="NF006777">
    <property type="entry name" value="PRK09292.1"/>
    <property type="match status" value="1"/>
</dbReference>
<dbReference type="NCBIfam" id="NF009070">
    <property type="entry name" value="PRK12405.1"/>
    <property type="match status" value="1"/>
</dbReference>
<dbReference type="PANTHER" id="PTHR30586">
    <property type="entry name" value="ELECTRON TRANSPORT COMPLEX PROTEIN RNFE"/>
    <property type="match status" value="1"/>
</dbReference>
<dbReference type="PANTHER" id="PTHR30586:SF1">
    <property type="entry name" value="NA(+)-TRANSLOCATING NADH-QUINONE REDUCTASE SUBUNIT D"/>
    <property type="match status" value="1"/>
</dbReference>
<dbReference type="Pfam" id="PF02508">
    <property type="entry name" value="Rnf-Nqr"/>
    <property type="match status" value="1"/>
</dbReference>
<dbReference type="PIRSF" id="PIRSF006102">
    <property type="entry name" value="NQR_DE"/>
    <property type="match status" value="1"/>
</dbReference>
<evidence type="ECO:0000255" key="1">
    <source>
        <dbReference type="HAMAP-Rule" id="MF_00428"/>
    </source>
</evidence>
<keyword id="KW-0997">Cell inner membrane</keyword>
<keyword id="KW-1003">Cell membrane</keyword>
<keyword id="KW-0406">Ion transport</keyword>
<keyword id="KW-0472">Membrane</keyword>
<keyword id="KW-0520">NAD</keyword>
<keyword id="KW-1185">Reference proteome</keyword>
<keyword id="KW-0915">Sodium</keyword>
<keyword id="KW-0739">Sodium transport</keyword>
<keyword id="KW-1278">Translocase</keyword>
<keyword id="KW-0812">Transmembrane</keyword>
<keyword id="KW-1133">Transmembrane helix</keyword>
<keyword id="KW-0813">Transport</keyword>
<keyword id="KW-0830">Ubiquinone</keyword>
<organism>
    <name type="scientific">Tolumonas auensis (strain DSM 9187 / NBRC 110442 / TA 4)</name>
    <dbReference type="NCBI Taxonomy" id="595494"/>
    <lineage>
        <taxon>Bacteria</taxon>
        <taxon>Pseudomonadati</taxon>
        <taxon>Pseudomonadota</taxon>
        <taxon>Gammaproteobacteria</taxon>
        <taxon>Aeromonadales</taxon>
        <taxon>Aeromonadaceae</taxon>
        <taxon>Tolumonas</taxon>
    </lineage>
</organism>
<gene>
    <name evidence="1" type="primary">nqrD</name>
    <name type="ordered locus">Tola_2996</name>
</gene>
<feature type="chain" id="PRO_1000206064" description="Na(+)-translocating NADH-quinone reductase subunit D">
    <location>
        <begin position="1"/>
        <end position="215"/>
    </location>
</feature>
<feature type="transmembrane region" description="Helical" evidence="1">
    <location>
        <begin position="14"/>
        <end position="34"/>
    </location>
</feature>
<feature type="transmembrane region" description="Helical" evidence="1">
    <location>
        <begin position="42"/>
        <end position="62"/>
    </location>
</feature>
<feature type="transmembrane region" description="Helical" evidence="1">
    <location>
        <begin position="72"/>
        <end position="92"/>
    </location>
</feature>
<feature type="transmembrane region" description="Helical" evidence="1">
    <location>
        <begin position="103"/>
        <end position="123"/>
    </location>
</feature>
<feature type="transmembrane region" description="Helical" evidence="1">
    <location>
        <begin position="131"/>
        <end position="151"/>
    </location>
</feature>
<feature type="transmembrane region" description="Helical" evidence="1">
    <location>
        <begin position="178"/>
        <end position="198"/>
    </location>
</feature>